<name>PSD_DESHD</name>
<comment type="function">
    <text evidence="1">Catalyzes the formation of phosphatidylethanolamine (PtdEtn) from phosphatidylserine (PtdSer).</text>
</comment>
<comment type="catalytic activity">
    <reaction evidence="1">
        <text>a 1,2-diacyl-sn-glycero-3-phospho-L-serine + H(+) = a 1,2-diacyl-sn-glycero-3-phosphoethanolamine + CO2</text>
        <dbReference type="Rhea" id="RHEA:20828"/>
        <dbReference type="ChEBI" id="CHEBI:15378"/>
        <dbReference type="ChEBI" id="CHEBI:16526"/>
        <dbReference type="ChEBI" id="CHEBI:57262"/>
        <dbReference type="ChEBI" id="CHEBI:64612"/>
        <dbReference type="EC" id="4.1.1.65"/>
    </reaction>
</comment>
<comment type="cofactor">
    <cofactor evidence="1">
        <name>pyruvate</name>
        <dbReference type="ChEBI" id="CHEBI:15361"/>
    </cofactor>
    <text evidence="1">Binds 1 pyruvoyl group covalently per subunit.</text>
</comment>
<comment type="pathway">
    <text evidence="1">Phospholipid metabolism; phosphatidylethanolamine biosynthesis; phosphatidylethanolamine from CDP-diacylglycerol: step 2/2.</text>
</comment>
<comment type="subunit">
    <text evidence="1">Heterodimer of a large membrane-associated beta subunit and a small pyruvoyl-containing alpha subunit.</text>
</comment>
<comment type="subcellular location">
    <subcellularLocation>
        <location evidence="1">Cell membrane</location>
        <topology evidence="1">Peripheral membrane protein</topology>
    </subcellularLocation>
</comment>
<comment type="PTM">
    <text evidence="1">Is synthesized initially as an inactive proenzyme. Formation of the active enzyme involves a self-maturation process in which the active site pyruvoyl group is generated from an internal serine residue via an autocatalytic post-translational modification. Two non-identical subunits are generated from the proenzyme in this reaction, and the pyruvate is formed at the N-terminus of the alpha chain, which is derived from the carboxyl end of the proenzyme. The autoendoproteolytic cleavage occurs by a canonical serine protease mechanism, in which the side chain hydroxyl group of the serine supplies its oxygen atom to form the C-terminus of the beta chain, while the remainder of the serine residue undergoes an oxidative deamination to produce ammonia and the pyruvoyl prosthetic group on the alpha chain. During this reaction, the Ser that is part of the protease active site of the proenzyme becomes the pyruvoyl prosthetic group, which constitutes an essential element of the active site of the mature decarboxylase.</text>
</comment>
<comment type="similarity">
    <text evidence="1">Belongs to the phosphatidylserine decarboxylase family. PSD-B subfamily. Prokaryotic type II sub-subfamily.</text>
</comment>
<dbReference type="EC" id="4.1.1.65" evidence="1"/>
<dbReference type="EMBL" id="CP001336">
    <property type="protein sequence ID" value="ACL21557.1"/>
    <property type="molecule type" value="Genomic_DNA"/>
</dbReference>
<dbReference type="RefSeq" id="WP_005810883.1">
    <property type="nucleotide sequence ID" value="NC_011830.1"/>
</dbReference>
<dbReference type="SMR" id="B8FQ96"/>
<dbReference type="KEGG" id="dhd:Dhaf_3539"/>
<dbReference type="HOGENOM" id="CLU_029061_2_2_9"/>
<dbReference type="UniPathway" id="UPA00558">
    <property type="reaction ID" value="UER00616"/>
</dbReference>
<dbReference type="Proteomes" id="UP000007726">
    <property type="component" value="Chromosome"/>
</dbReference>
<dbReference type="GO" id="GO:0005886">
    <property type="term" value="C:plasma membrane"/>
    <property type="evidence" value="ECO:0007669"/>
    <property type="project" value="UniProtKB-SubCell"/>
</dbReference>
<dbReference type="GO" id="GO:0004609">
    <property type="term" value="F:phosphatidylserine decarboxylase activity"/>
    <property type="evidence" value="ECO:0007669"/>
    <property type="project" value="UniProtKB-UniRule"/>
</dbReference>
<dbReference type="GO" id="GO:0006646">
    <property type="term" value="P:phosphatidylethanolamine biosynthetic process"/>
    <property type="evidence" value="ECO:0007669"/>
    <property type="project" value="UniProtKB-UniRule"/>
</dbReference>
<dbReference type="HAMAP" id="MF_00663">
    <property type="entry name" value="PS_decarb_PSD_B_type2"/>
    <property type="match status" value="1"/>
</dbReference>
<dbReference type="InterPro" id="IPR003817">
    <property type="entry name" value="PS_Dcarbxylase"/>
</dbReference>
<dbReference type="InterPro" id="IPR033177">
    <property type="entry name" value="PSD-B"/>
</dbReference>
<dbReference type="InterPro" id="IPR033179">
    <property type="entry name" value="PSD_type2_pro"/>
</dbReference>
<dbReference type="NCBIfam" id="NF001941">
    <property type="entry name" value="PRK00723.1"/>
    <property type="match status" value="1"/>
</dbReference>
<dbReference type="NCBIfam" id="TIGR00163">
    <property type="entry name" value="PS_decarb"/>
    <property type="match status" value="1"/>
</dbReference>
<dbReference type="PANTHER" id="PTHR10067">
    <property type="entry name" value="PHOSPHATIDYLSERINE DECARBOXYLASE"/>
    <property type="match status" value="1"/>
</dbReference>
<dbReference type="PANTHER" id="PTHR10067:SF17">
    <property type="entry name" value="PHOSPHATIDYLSERINE DECARBOXYLASE PROENZYME 2"/>
    <property type="match status" value="1"/>
</dbReference>
<dbReference type="Pfam" id="PF02666">
    <property type="entry name" value="PS_Dcarbxylase"/>
    <property type="match status" value="1"/>
</dbReference>
<organism>
    <name type="scientific">Desulfitobacterium hafniense (strain DSM 10664 / DCB-2)</name>
    <dbReference type="NCBI Taxonomy" id="272564"/>
    <lineage>
        <taxon>Bacteria</taxon>
        <taxon>Bacillati</taxon>
        <taxon>Bacillota</taxon>
        <taxon>Clostridia</taxon>
        <taxon>Eubacteriales</taxon>
        <taxon>Desulfitobacteriaceae</taxon>
        <taxon>Desulfitobacterium</taxon>
    </lineage>
</organism>
<accession>B8FQ96</accession>
<feature type="chain" id="PRO_1000147619" description="Phosphatidylserine decarboxylase beta chain" evidence="1">
    <location>
        <begin position="1"/>
        <end position="255"/>
    </location>
</feature>
<feature type="chain" id="PRO_1000147620" description="Phosphatidylserine decarboxylase alpha chain" evidence="1">
    <location>
        <begin position="256"/>
        <end position="298"/>
    </location>
</feature>
<feature type="active site" description="Charge relay system; for autoendoproteolytic cleavage activity" evidence="1">
    <location>
        <position position="113"/>
    </location>
</feature>
<feature type="active site" description="Charge relay system; for autoendoproteolytic cleavage activity" evidence="1">
    <location>
        <position position="169"/>
    </location>
</feature>
<feature type="active site" description="Charge relay system; for autoendoproteolytic cleavage activity" evidence="1">
    <location>
        <position position="256"/>
    </location>
</feature>
<feature type="active site" description="Schiff-base intermediate with substrate; via pyruvic acid; for decarboxylase activity" evidence="1">
    <location>
        <position position="256"/>
    </location>
</feature>
<feature type="site" description="Cleavage (non-hydrolytic); by autocatalysis" evidence="1">
    <location>
        <begin position="255"/>
        <end position="256"/>
    </location>
</feature>
<feature type="modified residue" description="Pyruvic acid (Ser); by autocatalysis" evidence="1">
    <location>
        <position position="256"/>
    </location>
</feature>
<reference key="1">
    <citation type="journal article" date="2012" name="BMC Microbiol.">
        <title>Genome sequence of Desulfitobacterium hafniense DCB-2, a Gram-positive anaerobe capable of dehalogenation and metal reduction.</title>
        <authorList>
            <person name="Kim S.H."/>
            <person name="Harzman C."/>
            <person name="Davis J.K."/>
            <person name="Hutcheson R."/>
            <person name="Broderick J.B."/>
            <person name="Marsh T.L."/>
            <person name="Tiedje J.M."/>
        </authorList>
    </citation>
    <scope>NUCLEOTIDE SEQUENCE [LARGE SCALE GENOMIC DNA]</scope>
    <source>
        <strain>DSM 10664 / DCB-2</strain>
    </source>
</reference>
<evidence type="ECO:0000255" key="1">
    <source>
        <dbReference type="HAMAP-Rule" id="MF_00663"/>
    </source>
</evidence>
<proteinExistence type="inferred from homology"/>
<keyword id="KW-1003">Cell membrane</keyword>
<keyword id="KW-0210">Decarboxylase</keyword>
<keyword id="KW-0444">Lipid biosynthesis</keyword>
<keyword id="KW-0443">Lipid metabolism</keyword>
<keyword id="KW-0456">Lyase</keyword>
<keyword id="KW-0472">Membrane</keyword>
<keyword id="KW-0594">Phospholipid biosynthesis</keyword>
<keyword id="KW-1208">Phospholipid metabolism</keyword>
<keyword id="KW-0670">Pyruvate</keyword>
<keyword id="KW-0865">Zymogen</keyword>
<gene>
    <name evidence="1" type="primary">psd</name>
    <name type="ordered locus">Dhaf_3539</name>
</gene>
<protein>
    <recommendedName>
        <fullName evidence="1">Phosphatidylserine decarboxylase proenzyme</fullName>
        <ecNumber evidence="1">4.1.1.65</ecNumber>
    </recommendedName>
    <component>
        <recommendedName>
            <fullName evidence="1">Phosphatidylserine decarboxylase alpha chain</fullName>
        </recommendedName>
    </component>
    <component>
        <recommendedName>
            <fullName evidence="1">Phosphatidylserine decarboxylase beta chain</fullName>
        </recommendedName>
    </component>
</protein>
<sequence>MIKYYDRKTQTYQIEKVAGEKMIRWTYSSPVGMRLLETVVKKRMCSSFYGWYLDRRISRRKIHPFVCKFDLDLSIAEKNLKDFSSFNDFFYRKLKPSARSIDPCQDSLISLGDGKLLAYEDINLDCLVQVKGLTYSLKELIKDPETASKYKRGTCLILRLCPTDYHRFHFIDSGICEPSHRIKGSYYSVNPVALQKVAKLFCENKREWSIFHSDHFGDILTIEVGATFVGSIIQSYTPHQPVARGDEKGYFKFGGSTVLLFFEENKIKIDPDIVEQTKLGYETYILFGEKIGVRHKGR</sequence>